<name>PYRB_XYLFT</name>
<reference key="1">
    <citation type="journal article" date="2003" name="J. Bacteriol.">
        <title>Comparative analyses of the complete genome sequences of Pierce's disease and citrus variegated chlorosis strains of Xylella fastidiosa.</title>
        <authorList>
            <person name="Van Sluys M.A."/>
            <person name="de Oliveira M.C."/>
            <person name="Monteiro-Vitorello C.B."/>
            <person name="Miyaki C.Y."/>
            <person name="Furlan L.R."/>
            <person name="Camargo L.E.A."/>
            <person name="da Silva A.C.R."/>
            <person name="Moon D.H."/>
            <person name="Takita M.A."/>
            <person name="Lemos E.G.M."/>
            <person name="Machado M.A."/>
            <person name="Ferro M.I.T."/>
            <person name="da Silva F.R."/>
            <person name="Goldman M.H.S."/>
            <person name="Goldman G.H."/>
            <person name="Lemos M.V.F."/>
            <person name="El-Dorry H."/>
            <person name="Tsai S.M."/>
            <person name="Carrer H."/>
            <person name="Carraro D.M."/>
            <person name="de Oliveira R.C."/>
            <person name="Nunes L.R."/>
            <person name="Siqueira W.J."/>
            <person name="Coutinho L.L."/>
            <person name="Kimura E.T."/>
            <person name="Ferro E.S."/>
            <person name="Harakava R."/>
            <person name="Kuramae E.E."/>
            <person name="Marino C.L."/>
            <person name="Giglioti E."/>
            <person name="Abreu I.L."/>
            <person name="Alves L.M.C."/>
            <person name="do Amaral A.M."/>
            <person name="Baia G.S."/>
            <person name="Blanco S.R."/>
            <person name="Brito M.S."/>
            <person name="Cannavan F.S."/>
            <person name="Celestino A.V."/>
            <person name="da Cunha A.F."/>
            <person name="Fenille R.C."/>
            <person name="Ferro J.A."/>
            <person name="Formighieri E.F."/>
            <person name="Kishi L.T."/>
            <person name="Leoni S.G."/>
            <person name="Oliveira A.R."/>
            <person name="Rosa V.E. Jr."/>
            <person name="Sassaki F.T."/>
            <person name="Sena J.A.D."/>
            <person name="de Souza A.A."/>
            <person name="Truffi D."/>
            <person name="Tsukumo F."/>
            <person name="Yanai G.M."/>
            <person name="Zaros L.G."/>
            <person name="Civerolo E.L."/>
            <person name="Simpson A.J.G."/>
            <person name="Almeida N.F. Jr."/>
            <person name="Setubal J.C."/>
            <person name="Kitajima J.P."/>
        </authorList>
    </citation>
    <scope>NUCLEOTIDE SEQUENCE [LARGE SCALE GENOMIC DNA]</scope>
    <source>
        <strain>Temecula1 / ATCC 700964</strain>
    </source>
</reference>
<organism>
    <name type="scientific">Xylella fastidiosa (strain Temecula1 / ATCC 700964)</name>
    <dbReference type="NCBI Taxonomy" id="183190"/>
    <lineage>
        <taxon>Bacteria</taxon>
        <taxon>Pseudomonadati</taxon>
        <taxon>Pseudomonadota</taxon>
        <taxon>Gammaproteobacteria</taxon>
        <taxon>Lysobacterales</taxon>
        <taxon>Lysobacteraceae</taxon>
        <taxon>Xylella</taxon>
    </lineage>
</organism>
<proteinExistence type="inferred from homology"/>
<feature type="chain" id="PRO_0000113236" description="Aspartate carbamoyltransferase catalytic subunit">
    <location>
        <begin position="1"/>
        <end position="320"/>
    </location>
</feature>
<feature type="binding site" evidence="1">
    <location>
        <position position="70"/>
    </location>
    <ligand>
        <name>carbamoyl phosphate</name>
        <dbReference type="ChEBI" id="CHEBI:58228"/>
    </ligand>
</feature>
<feature type="binding site" evidence="1">
    <location>
        <position position="71"/>
    </location>
    <ligand>
        <name>carbamoyl phosphate</name>
        <dbReference type="ChEBI" id="CHEBI:58228"/>
    </ligand>
</feature>
<feature type="binding site" evidence="1">
    <location>
        <position position="98"/>
    </location>
    <ligand>
        <name>L-aspartate</name>
        <dbReference type="ChEBI" id="CHEBI:29991"/>
    </ligand>
</feature>
<feature type="binding site" evidence="1">
    <location>
        <position position="120"/>
    </location>
    <ligand>
        <name>carbamoyl phosphate</name>
        <dbReference type="ChEBI" id="CHEBI:58228"/>
    </ligand>
</feature>
<feature type="binding site" evidence="1">
    <location>
        <position position="150"/>
    </location>
    <ligand>
        <name>carbamoyl phosphate</name>
        <dbReference type="ChEBI" id="CHEBI:58228"/>
    </ligand>
</feature>
<feature type="binding site" evidence="1">
    <location>
        <position position="153"/>
    </location>
    <ligand>
        <name>carbamoyl phosphate</name>
        <dbReference type="ChEBI" id="CHEBI:58228"/>
    </ligand>
</feature>
<feature type="binding site" evidence="1">
    <location>
        <position position="184"/>
    </location>
    <ligand>
        <name>L-aspartate</name>
        <dbReference type="ChEBI" id="CHEBI:29991"/>
    </ligand>
</feature>
<feature type="binding site" evidence="1">
    <location>
        <position position="239"/>
    </location>
    <ligand>
        <name>L-aspartate</name>
        <dbReference type="ChEBI" id="CHEBI:29991"/>
    </ligand>
</feature>
<feature type="binding site" evidence="1">
    <location>
        <position position="280"/>
    </location>
    <ligand>
        <name>carbamoyl phosphate</name>
        <dbReference type="ChEBI" id="CHEBI:58228"/>
    </ligand>
</feature>
<feature type="binding site" evidence="1">
    <location>
        <position position="281"/>
    </location>
    <ligand>
        <name>carbamoyl phosphate</name>
        <dbReference type="ChEBI" id="CHEBI:58228"/>
    </ligand>
</feature>
<keyword id="KW-0665">Pyrimidine biosynthesis</keyword>
<keyword id="KW-1185">Reference proteome</keyword>
<keyword id="KW-0808">Transferase</keyword>
<evidence type="ECO:0000255" key="1">
    <source>
        <dbReference type="HAMAP-Rule" id="MF_00001"/>
    </source>
</evidence>
<protein>
    <recommendedName>
        <fullName evidence="1">Aspartate carbamoyltransferase catalytic subunit</fullName>
        <ecNumber evidence="1">2.1.3.2</ecNumber>
    </recommendedName>
    <alternativeName>
        <fullName evidence="1">Aspartate transcarbamylase</fullName>
        <shortName evidence="1">ATCase</shortName>
    </alternativeName>
</protein>
<gene>
    <name evidence="1" type="primary">pyrB</name>
    <name type="ordered locus">PD_1274</name>
</gene>
<dbReference type="EC" id="2.1.3.2" evidence="1"/>
<dbReference type="EMBL" id="AE009442">
    <property type="protein sequence ID" value="AAO29123.1"/>
    <property type="molecule type" value="Genomic_DNA"/>
</dbReference>
<dbReference type="SMR" id="Q87C22"/>
<dbReference type="KEGG" id="xft:PD_1274"/>
<dbReference type="HOGENOM" id="CLU_043846_2_0_6"/>
<dbReference type="UniPathway" id="UPA00070">
    <property type="reaction ID" value="UER00116"/>
</dbReference>
<dbReference type="Proteomes" id="UP000002516">
    <property type="component" value="Chromosome"/>
</dbReference>
<dbReference type="GO" id="GO:0005829">
    <property type="term" value="C:cytosol"/>
    <property type="evidence" value="ECO:0007669"/>
    <property type="project" value="TreeGrafter"/>
</dbReference>
<dbReference type="GO" id="GO:0016597">
    <property type="term" value="F:amino acid binding"/>
    <property type="evidence" value="ECO:0007669"/>
    <property type="project" value="InterPro"/>
</dbReference>
<dbReference type="GO" id="GO:0004070">
    <property type="term" value="F:aspartate carbamoyltransferase activity"/>
    <property type="evidence" value="ECO:0007669"/>
    <property type="project" value="UniProtKB-UniRule"/>
</dbReference>
<dbReference type="GO" id="GO:0006207">
    <property type="term" value="P:'de novo' pyrimidine nucleobase biosynthetic process"/>
    <property type="evidence" value="ECO:0007669"/>
    <property type="project" value="InterPro"/>
</dbReference>
<dbReference type="GO" id="GO:0044205">
    <property type="term" value="P:'de novo' UMP biosynthetic process"/>
    <property type="evidence" value="ECO:0007669"/>
    <property type="project" value="UniProtKB-UniRule"/>
</dbReference>
<dbReference type="GO" id="GO:0006520">
    <property type="term" value="P:amino acid metabolic process"/>
    <property type="evidence" value="ECO:0007669"/>
    <property type="project" value="InterPro"/>
</dbReference>
<dbReference type="FunFam" id="3.40.50.1370:FF:000007">
    <property type="entry name" value="Aspartate carbamoyltransferase"/>
    <property type="match status" value="1"/>
</dbReference>
<dbReference type="Gene3D" id="3.40.50.1370">
    <property type="entry name" value="Aspartate/ornithine carbamoyltransferase"/>
    <property type="match status" value="2"/>
</dbReference>
<dbReference type="HAMAP" id="MF_00001">
    <property type="entry name" value="Asp_carb_tr"/>
    <property type="match status" value="1"/>
</dbReference>
<dbReference type="InterPro" id="IPR006132">
    <property type="entry name" value="Asp/Orn_carbamoyltranf_P-bd"/>
</dbReference>
<dbReference type="InterPro" id="IPR006130">
    <property type="entry name" value="Asp/Orn_carbamoylTrfase"/>
</dbReference>
<dbReference type="InterPro" id="IPR036901">
    <property type="entry name" value="Asp/Orn_carbamoylTrfase_sf"/>
</dbReference>
<dbReference type="InterPro" id="IPR002082">
    <property type="entry name" value="Asp_carbamoyltransf"/>
</dbReference>
<dbReference type="InterPro" id="IPR006131">
    <property type="entry name" value="Asp_carbamoyltransf_Asp/Orn-bd"/>
</dbReference>
<dbReference type="NCBIfam" id="TIGR00670">
    <property type="entry name" value="asp_carb_tr"/>
    <property type="match status" value="1"/>
</dbReference>
<dbReference type="NCBIfam" id="NF002032">
    <property type="entry name" value="PRK00856.1"/>
    <property type="match status" value="1"/>
</dbReference>
<dbReference type="PANTHER" id="PTHR45753:SF6">
    <property type="entry name" value="ASPARTATE CARBAMOYLTRANSFERASE"/>
    <property type="match status" value="1"/>
</dbReference>
<dbReference type="PANTHER" id="PTHR45753">
    <property type="entry name" value="ORNITHINE CARBAMOYLTRANSFERASE, MITOCHONDRIAL"/>
    <property type="match status" value="1"/>
</dbReference>
<dbReference type="Pfam" id="PF00185">
    <property type="entry name" value="OTCace"/>
    <property type="match status" value="1"/>
</dbReference>
<dbReference type="Pfam" id="PF02729">
    <property type="entry name" value="OTCace_N"/>
    <property type="match status" value="1"/>
</dbReference>
<dbReference type="PRINTS" id="PR00100">
    <property type="entry name" value="AOTCASE"/>
</dbReference>
<dbReference type="PRINTS" id="PR00101">
    <property type="entry name" value="ATCASE"/>
</dbReference>
<dbReference type="SUPFAM" id="SSF53671">
    <property type="entry name" value="Aspartate/ornithine carbamoyltransferase"/>
    <property type="match status" value="1"/>
</dbReference>
<dbReference type="PROSITE" id="PS00097">
    <property type="entry name" value="CARBAMOYLTRANSFERASE"/>
    <property type="match status" value="1"/>
</dbReference>
<comment type="function">
    <text evidence="1">Catalyzes the condensation of carbamoyl phosphate and aspartate to form carbamoyl aspartate and inorganic phosphate, the committed step in the de novo pyrimidine nucleotide biosynthesis pathway.</text>
</comment>
<comment type="catalytic activity">
    <reaction evidence="1">
        <text>carbamoyl phosphate + L-aspartate = N-carbamoyl-L-aspartate + phosphate + H(+)</text>
        <dbReference type="Rhea" id="RHEA:20013"/>
        <dbReference type="ChEBI" id="CHEBI:15378"/>
        <dbReference type="ChEBI" id="CHEBI:29991"/>
        <dbReference type="ChEBI" id="CHEBI:32814"/>
        <dbReference type="ChEBI" id="CHEBI:43474"/>
        <dbReference type="ChEBI" id="CHEBI:58228"/>
        <dbReference type="EC" id="2.1.3.2"/>
    </reaction>
</comment>
<comment type="pathway">
    <text evidence="1">Pyrimidine metabolism; UMP biosynthesis via de novo pathway; (S)-dihydroorotate from bicarbonate: step 2/3.</text>
</comment>
<comment type="subunit">
    <text evidence="1">Heterododecamer (2C3:3R2) of six catalytic PyrB chains organized as two trimers (C3), and six regulatory PyrI chains organized as three dimers (R2).</text>
</comment>
<comment type="similarity">
    <text evidence="1">Belongs to the aspartate/ornithine carbamoyltransferase superfamily. ATCase family.</text>
</comment>
<sequence>MNLKAITLMQFDSNGRLRHLLTLEGLSRHTLLQLLDCAAQNCALGVDPMGKRNVLAGMAVCTLFFEPSTRTRHSFHLAAQRLGADVLNFDASMSSTSKGESACDTLKNLEAMGVRGFIVRHPEEIVIAQLAAVVGEGTVLINAGAGRSTHPTQGLLDMLTLCQAKGNDFSKLKLLFVGDIKHSRVARSNLHALRTLGAGQIRVCGPTALLPHDGLLSGCVVSQDFDAMLEGVDVLMMLRLQRERMEEGLVPSLEHYHANYGLTAARLARAAPDAVVLHPGPINRGVEITDEVADGPQSWILRQASNGVMVRMAVLETLLG</sequence>
<accession>Q87C22</accession>